<accession>C1F111</accession>
<gene>
    <name evidence="1" type="primary">recR</name>
    <name type="ordered locus">ACP_0511</name>
</gene>
<sequence length="199" mass="21824">MTRFAEPMARLIEELRKLPGIGTRSAQRLAFHILRSSTADAEALAGAVRDLKAQLRLCSVCNNITDVDPCVFCSSPTRNQRLVCVVEEPTNIAAVEKTRGYNGVYHVLHGTLSPLHGVGPEHLRTVNLLARVERGEVDELILATSPTVEGEATANYLADLLRPLRVRLTRIATGVPAGSDIEYVDEVTMTRALEGRREL</sequence>
<name>RECR_ACIC5</name>
<keyword id="KW-0227">DNA damage</keyword>
<keyword id="KW-0233">DNA recombination</keyword>
<keyword id="KW-0234">DNA repair</keyword>
<keyword id="KW-0479">Metal-binding</keyword>
<keyword id="KW-1185">Reference proteome</keyword>
<keyword id="KW-0862">Zinc</keyword>
<keyword id="KW-0863">Zinc-finger</keyword>
<comment type="function">
    <text evidence="1">May play a role in DNA repair. It seems to be involved in an RecBC-independent recombinational process of DNA repair. It may act with RecF and RecO.</text>
</comment>
<comment type="similarity">
    <text evidence="1">Belongs to the RecR family.</text>
</comment>
<proteinExistence type="inferred from homology"/>
<evidence type="ECO:0000255" key="1">
    <source>
        <dbReference type="HAMAP-Rule" id="MF_00017"/>
    </source>
</evidence>
<feature type="chain" id="PRO_1000116668" description="Recombination protein RecR">
    <location>
        <begin position="1"/>
        <end position="199"/>
    </location>
</feature>
<feature type="domain" description="Toprim" evidence="1">
    <location>
        <begin position="81"/>
        <end position="176"/>
    </location>
</feature>
<feature type="zinc finger region" description="C4-type" evidence="1">
    <location>
        <begin position="58"/>
        <end position="73"/>
    </location>
</feature>
<organism>
    <name type="scientific">Acidobacterium capsulatum (strain ATCC 51196 / DSM 11244 / BCRC 80197 / JCM 7670 / NBRC 15755 / NCIMB 13165 / 161)</name>
    <dbReference type="NCBI Taxonomy" id="240015"/>
    <lineage>
        <taxon>Bacteria</taxon>
        <taxon>Pseudomonadati</taxon>
        <taxon>Acidobacteriota</taxon>
        <taxon>Terriglobia</taxon>
        <taxon>Terriglobales</taxon>
        <taxon>Acidobacteriaceae</taxon>
        <taxon>Acidobacterium</taxon>
    </lineage>
</organism>
<reference key="1">
    <citation type="journal article" date="2009" name="Appl. Environ. Microbiol.">
        <title>Three genomes from the phylum Acidobacteria provide insight into the lifestyles of these microorganisms in soils.</title>
        <authorList>
            <person name="Ward N.L."/>
            <person name="Challacombe J.F."/>
            <person name="Janssen P.H."/>
            <person name="Henrissat B."/>
            <person name="Coutinho P.M."/>
            <person name="Wu M."/>
            <person name="Xie G."/>
            <person name="Haft D.H."/>
            <person name="Sait M."/>
            <person name="Badger J."/>
            <person name="Barabote R.D."/>
            <person name="Bradley B."/>
            <person name="Brettin T.S."/>
            <person name="Brinkac L.M."/>
            <person name="Bruce D."/>
            <person name="Creasy T."/>
            <person name="Daugherty S.C."/>
            <person name="Davidsen T.M."/>
            <person name="DeBoy R.T."/>
            <person name="Detter J.C."/>
            <person name="Dodson R.J."/>
            <person name="Durkin A.S."/>
            <person name="Ganapathy A."/>
            <person name="Gwinn-Giglio M."/>
            <person name="Han C.S."/>
            <person name="Khouri H."/>
            <person name="Kiss H."/>
            <person name="Kothari S.P."/>
            <person name="Madupu R."/>
            <person name="Nelson K.E."/>
            <person name="Nelson W.C."/>
            <person name="Paulsen I."/>
            <person name="Penn K."/>
            <person name="Ren Q."/>
            <person name="Rosovitz M.J."/>
            <person name="Selengut J.D."/>
            <person name="Shrivastava S."/>
            <person name="Sullivan S.A."/>
            <person name="Tapia R."/>
            <person name="Thompson L.S."/>
            <person name="Watkins K.L."/>
            <person name="Yang Q."/>
            <person name="Yu C."/>
            <person name="Zafar N."/>
            <person name="Zhou L."/>
            <person name="Kuske C.R."/>
        </authorList>
    </citation>
    <scope>NUCLEOTIDE SEQUENCE [LARGE SCALE GENOMIC DNA]</scope>
    <source>
        <strain>ATCC 51196 / DSM 11244 / BCRC 80197 / JCM 7670 / NBRC 15755 / NCIMB 13165 / 161</strain>
    </source>
</reference>
<dbReference type="EMBL" id="CP001472">
    <property type="protein sequence ID" value="ACO33203.1"/>
    <property type="molecule type" value="Genomic_DNA"/>
</dbReference>
<dbReference type="RefSeq" id="WP_012680902.1">
    <property type="nucleotide sequence ID" value="NC_012483.1"/>
</dbReference>
<dbReference type="SMR" id="C1F111"/>
<dbReference type="FunCoup" id="C1F111">
    <property type="interactions" value="236"/>
</dbReference>
<dbReference type="STRING" id="240015.ACP_0511"/>
<dbReference type="KEGG" id="aca:ACP_0511"/>
<dbReference type="eggNOG" id="COG0353">
    <property type="taxonomic scope" value="Bacteria"/>
</dbReference>
<dbReference type="HOGENOM" id="CLU_060739_1_0_0"/>
<dbReference type="InParanoid" id="C1F111"/>
<dbReference type="OrthoDB" id="9802672at2"/>
<dbReference type="Proteomes" id="UP000002207">
    <property type="component" value="Chromosome"/>
</dbReference>
<dbReference type="GO" id="GO:0003677">
    <property type="term" value="F:DNA binding"/>
    <property type="evidence" value="ECO:0007669"/>
    <property type="project" value="UniProtKB-UniRule"/>
</dbReference>
<dbReference type="GO" id="GO:0008270">
    <property type="term" value="F:zinc ion binding"/>
    <property type="evidence" value="ECO:0007669"/>
    <property type="project" value="UniProtKB-KW"/>
</dbReference>
<dbReference type="GO" id="GO:0006310">
    <property type="term" value="P:DNA recombination"/>
    <property type="evidence" value="ECO:0007669"/>
    <property type="project" value="UniProtKB-UniRule"/>
</dbReference>
<dbReference type="GO" id="GO:0006281">
    <property type="term" value="P:DNA repair"/>
    <property type="evidence" value="ECO:0007669"/>
    <property type="project" value="UniProtKB-UniRule"/>
</dbReference>
<dbReference type="CDD" id="cd01025">
    <property type="entry name" value="TOPRIM_recR"/>
    <property type="match status" value="1"/>
</dbReference>
<dbReference type="Gene3D" id="3.30.60.80">
    <property type="match status" value="1"/>
</dbReference>
<dbReference type="Gene3D" id="3.40.1360.10">
    <property type="match status" value="1"/>
</dbReference>
<dbReference type="Gene3D" id="6.10.250.240">
    <property type="match status" value="1"/>
</dbReference>
<dbReference type="Gene3D" id="1.10.8.420">
    <property type="entry name" value="RecR Domain 1"/>
    <property type="match status" value="1"/>
</dbReference>
<dbReference type="HAMAP" id="MF_00017">
    <property type="entry name" value="RecR"/>
    <property type="match status" value="1"/>
</dbReference>
<dbReference type="InterPro" id="IPR000093">
    <property type="entry name" value="DNA_Rcmb_RecR"/>
</dbReference>
<dbReference type="InterPro" id="IPR023627">
    <property type="entry name" value="Rcmb_RecR"/>
</dbReference>
<dbReference type="InterPro" id="IPR015967">
    <property type="entry name" value="Rcmb_RecR_Znf"/>
</dbReference>
<dbReference type="InterPro" id="IPR006171">
    <property type="entry name" value="TOPRIM_dom"/>
</dbReference>
<dbReference type="InterPro" id="IPR034137">
    <property type="entry name" value="TOPRIM_RecR"/>
</dbReference>
<dbReference type="NCBIfam" id="TIGR00615">
    <property type="entry name" value="recR"/>
    <property type="match status" value="1"/>
</dbReference>
<dbReference type="PANTHER" id="PTHR30446">
    <property type="entry name" value="RECOMBINATION PROTEIN RECR"/>
    <property type="match status" value="1"/>
</dbReference>
<dbReference type="PANTHER" id="PTHR30446:SF0">
    <property type="entry name" value="RECOMBINATION PROTEIN RECR"/>
    <property type="match status" value="1"/>
</dbReference>
<dbReference type="Pfam" id="PF21175">
    <property type="entry name" value="RecR_C"/>
    <property type="match status" value="1"/>
</dbReference>
<dbReference type="Pfam" id="PF21176">
    <property type="entry name" value="RecR_HhH"/>
    <property type="match status" value="1"/>
</dbReference>
<dbReference type="Pfam" id="PF02132">
    <property type="entry name" value="RecR_ZnF"/>
    <property type="match status" value="1"/>
</dbReference>
<dbReference type="Pfam" id="PF13662">
    <property type="entry name" value="Toprim_4"/>
    <property type="match status" value="1"/>
</dbReference>
<dbReference type="SMART" id="SM00493">
    <property type="entry name" value="TOPRIM"/>
    <property type="match status" value="1"/>
</dbReference>
<dbReference type="SUPFAM" id="SSF111304">
    <property type="entry name" value="Recombination protein RecR"/>
    <property type="match status" value="1"/>
</dbReference>
<dbReference type="PROSITE" id="PS01300">
    <property type="entry name" value="RECR"/>
    <property type="match status" value="1"/>
</dbReference>
<dbReference type="PROSITE" id="PS50880">
    <property type="entry name" value="TOPRIM"/>
    <property type="match status" value="1"/>
</dbReference>
<protein>
    <recommendedName>
        <fullName evidence="1">Recombination protein RecR</fullName>
    </recommendedName>
</protein>